<organism>
    <name type="scientific">Desulforudis audaxviator (strain MP104C)</name>
    <dbReference type="NCBI Taxonomy" id="477974"/>
    <lineage>
        <taxon>Bacteria</taxon>
        <taxon>Bacillati</taxon>
        <taxon>Bacillota</taxon>
        <taxon>Clostridia</taxon>
        <taxon>Thermoanaerobacterales</taxon>
        <taxon>Candidatus Desulforudaceae</taxon>
        <taxon>Candidatus Desulforudis</taxon>
    </lineage>
</organism>
<feature type="chain" id="PRO_1000098184" description="6,7-dimethyl-8-ribityllumazine synthase">
    <location>
        <begin position="1"/>
        <end position="158"/>
    </location>
</feature>
<feature type="active site" description="Proton donor" evidence="1">
    <location>
        <position position="89"/>
    </location>
</feature>
<feature type="binding site" evidence="1">
    <location>
        <position position="23"/>
    </location>
    <ligand>
        <name>5-amino-6-(D-ribitylamino)uracil</name>
        <dbReference type="ChEBI" id="CHEBI:15934"/>
    </ligand>
</feature>
<feature type="binding site" evidence="1">
    <location>
        <begin position="57"/>
        <end position="59"/>
    </location>
    <ligand>
        <name>5-amino-6-(D-ribitylamino)uracil</name>
        <dbReference type="ChEBI" id="CHEBI:15934"/>
    </ligand>
</feature>
<feature type="binding site" evidence="1">
    <location>
        <begin position="81"/>
        <end position="83"/>
    </location>
    <ligand>
        <name>5-amino-6-(D-ribitylamino)uracil</name>
        <dbReference type="ChEBI" id="CHEBI:15934"/>
    </ligand>
</feature>
<feature type="binding site" evidence="1">
    <location>
        <begin position="86"/>
        <end position="87"/>
    </location>
    <ligand>
        <name>(2S)-2-hydroxy-3-oxobutyl phosphate</name>
        <dbReference type="ChEBI" id="CHEBI:58830"/>
    </ligand>
</feature>
<feature type="binding site" evidence="1">
    <location>
        <position position="114"/>
    </location>
    <ligand>
        <name>5-amino-6-(D-ribitylamino)uracil</name>
        <dbReference type="ChEBI" id="CHEBI:15934"/>
    </ligand>
</feature>
<feature type="binding site" evidence="1">
    <location>
        <position position="128"/>
    </location>
    <ligand>
        <name>(2S)-2-hydroxy-3-oxobutyl phosphate</name>
        <dbReference type="ChEBI" id="CHEBI:58830"/>
    </ligand>
</feature>
<name>RISB_DESAP</name>
<evidence type="ECO:0000255" key="1">
    <source>
        <dbReference type="HAMAP-Rule" id="MF_00178"/>
    </source>
</evidence>
<gene>
    <name evidence="1" type="primary">ribH</name>
    <name type="ordered locus">Daud_0626</name>
</gene>
<sequence length="158" mass="16943">MAKVFEGHLIGEGLRFGIVVARFNEFITHKLLSGAQDALIRHGVAENDIEVAWVPGAFEIPLVARRMLARNRYDAVLCLGTVIRGGTPHFEYVASEVAKGVAKVGLETGTPVIFGVITADTIEQAIERAGTKAGNKGWQAAVSGIEMANLVRRLESSS</sequence>
<reference key="1">
    <citation type="submission" date="2007-10" db="EMBL/GenBank/DDBJ databases">
        <title>Complete sequence of chromosome of Desulforudis audaxviator MP104C.</title>
        <authorList>
            <person name="Copeland A."/>
            <person name="Lucas S."/>
            <person name="Lapidus A."/>
            <person name="Barry K."/>
            <person name="Glavina del Rio T."/>
            <person name="Dalin E."/>
            <person name="Tice H."/>
            <person name="Bruce D."/>
            <person name="Pitluck S."/>
            <person name="Lowry S.R."/>
            <person name="Larimer F."/>
            <person name="Land M.L."/>
            <person name="Hauser L."/>
            <person name="Kyrpides N."/>
            <person name="Ivanova N.N."/>
            <person name="Richardson P."/>
        </authorList>
    </citation>
    <scope>NUCLEOTIDE SEQUENCE [LARGE SCALE GENOMIC DNA]</scope>
    <source>
        <strain>MP104C</strain>
    </source>
</reference>
<comment type="function">
    <text evidence="1">Catalyzes the formation of 6,7-dimethyl-8-ribityllumazine by condensation of 5-amino-6-(D-ribitylamino)uracil with 3,4-dihydroxy-2-butanone 4-phosphate. This is the penultimate step in the biosynthesis of riboflavin.</text>
</comment>
<comment type="catalytic activity">
    <reaction evidence="1">
        <text>(2S)-2-hydroxy-3-oxobutyl phosphate + 5-amino-6-(D-ribitylamino)uracil = 6,7-dimethyl-8-(1-D-ribityl)lumazine + phosphate + 2 H2O + H(+)</text>
        <dbReference type="Rhea" id="RHEA:26152"/>
        <dbReference type="ChEBI" id="CHEBI:15377"/>
        <dbReference type="ChEBI" id="CHEBI:15378"/>
        <dbReference type="ChEBI" id="CHEBI:15934"/>
        <dbReference type="ChEBI" id="CHEBI:43474"/>
        <dbReference type="ChEBI" id="CHEBI:58201"/>
        <dbReference type="ChEBI" id="CHEBI:58830"/>
        <dbReference type="EC" id="2.5.1.78"/>
    </reaction>
</comment>
<comment type="pathway">
    <text evidence="1">Cofactor biosynthesis; riboflavin biosynthesis; riboflavin from 2-hydroxy-3-oxobutyl phosphate and 5-amino-6-(D-ribitylamino)uracil: step 1/2.</text>
</comment>
<comment type="similarity">
    <text evidence="1">Belongs to the DMRL synthase family.</text>
</comment>
<proteinExistence type="inferred from homology"/>
<protein>
    <recommendedName>
        <fullName evidence="1">6,7-dimethyl-8-ribityllumazine synthase</fullName>
        <shortName evidence="1">DMRL synthase</shortName>
        <shortName evidence="1">LS</shortName>
        <shortName evidence="1">Lumazine synthase</shortName>
        <ecNumber evidence="1">2.5.1.78</ecNumber>
    </recommendedName>
</protein>
<accession>B1I2D4</accession>
<keyword id="KW-1185">Reference proteome</keyword>
<keyword id="KW-0686">Riboflavin biosynthesis</keyword>
<keyword id="KW-0808">Transferase</keyword>
<dbReference type="EC" id="2.5.1.78" evidence="1"/>
<dbReference type="EMBL" id="CP000860">
    <property type="protein sequence ID" value="ACA59160.1"/>
    <property type="molecule type" value="Genomic_DNA"/>
</dbReference>
<dbReference type="RefSeq" id="WP_012301748.1">
    <property type="nucleotide sequence ID" value="NC_010424.1"/>
</dbReference>
<dbReference type="SMR" id="B1I2D4"/>
<dbReference type="STRING" id="477974.Daud_0626"/>
<dbReference type="KEGG" id="dau:Daud_0626"/>
<dbReference type="eggNOG" id="COG0054">
    <property type="taxonomic scope" value="Bacteria"/>
</dbReference>
<dbReference type="HOGENOM" id="CLU_089358_1_1_9"/>
<dbReference type="OrthoDB" id="9809709at2"/>
<dbReference type="UniPathway" id="UPA00275">
    <property type="reaction ID" value="UER00404"/>
</dbReference>
<dbReference type="Proteomes" id="UP000008544">
    <property type="component" value="Chromosome"/>
</dbReference>
<dbReference type="GO" id="GO:0005829">
    <property type="term" value="C:cytosol"/>
    <property type="evidence" value="ECO:0007669"/>
    <property type="project" value="TreeGrafter"/>
</dbReference>
<dbReference type="GO" id="GO:0009349">
    <property type="term" value="C:riboflavin synthase complex"/>
    <property type="evidence" value="ECO:0007669"/>
    <property type="project" value="InterPro"/>
</dbReference>
<dbReference type="GO" id="GO:0000906">
    <property type="term" value="F:6,7-dimethyl-8-ribityllumazine synthase activity"/>
    <property type="evidence" value="ECO:0007669"/>
    <property type="project" value="UniProtKB-UniRule"/>
</dbReference>
<dbReference type="GO" id="GO:0009231">
    <property type="term" value="P:riboflavin biosynthetic process"/>
    <property type="evidence" value="ECO:0007669"/>
    <property type="project" value="UniProtKB-UniRule"/>
</dbReference>
<dbReference type="CDD" id="cd09209">
    <property type="entry name" value="Lumazine_synthase-I"/>
    <property type="match status" value="1"/>
</dbReference>
<dbReference type="FunFam" id="3.40.50.960:FF:000001">
    <property type="entry name" value="6,7-dimethyl-8-ribityllumazine synthase"/>
    <property type="match status" value="1"/>
</dbReference>
<dbReference type="Gene3D" id="3.40.50.960">
    <property type="entry name" value="Lumazine/riboflavin synthase"/>
    <property type="match status" value="1"/>
</dbReference>
<dbReference type="HAMAP" id="MF_00178">
    <property type="entry name" value="Lumazine_synth"/>
    <property type="match status" value="1"/>
</dbReference>
<dbReference type="InterPro" id="IPR034964">
    <property type="entry name" value="LS"/>
</dbReference>
<dbReference type="InterPro" id="IPR002180">
    <property type="entry name" value="LS/RS"/>
</dbReference>
<dbReference type="InterPro" id="IPR036467">
    <property type="entry name" value="LS/RS_sf"/>
</dbReference>
<dbReference type="NCBIfam" id="TIGR00114">
    <property type="entry name" value="lumazine-synth"/>
    <property type="match status" value="1"/>
</dbReference>
<dbReference type="NCBIfam" id="NF000812">
    <property type="entry name" value="PRK00061.1-4"/>
    <property type="match status" value="1"/>
</dbReference>
<dbReference type="PANTHER" id="PTHR21058:SF0">
    <property type="entry name" value="6,7-DIMETHYL-8-RIBITYLLUMAZINE SYNTHASE"/>
    <property type="match status" value="1"/>
</dbReference>
<dbReference type="PANTHER" id="PTHR21058">
    <property type="entry name" value="6,7-DIMETHYL-8-RIBITYLLUMAZINE SYNTHASE DMRL SYNTHASE LUMAZINE SYNTHASE"/>
    <property type="match status" value="1"/>
</dbReference>
<dbReference type="Pfam" id="PF00885">
    <property type="entry name" value="DMRL_synthase"/>
    <property type="match status" value="1"/>
</dbReference>
<dbReference type="SUPFAM" id="SSF52121">
    <property type="entry name" value="Lumazine synthase"/>
    <property type="match status" value="1"/>
</dbReference>